<name>RRT5_CANGA</name>
<accession>Q6FVV7</accession>
<proteinExistence type="inferred from homology"/>
<evidence type="ECO:0000250" key="1"/>
<evidence type="ECO:0000255" key="2">
    <source>
        <dbReference type="PROSITE-ProRule" id="PRU00176"/>
    </source>
</evidence>
<evidence type="ECO:0000256" key="3">
    <source>
        <dbReference type="SAM" id="MobiDB-lite"/>
    </source>
</evidence>
<evidence type="ECO:0000305" key="4"/>
<dbReference type="EMBL" id="CR380950">
    <property type="protein sequence ID" value="CAG58548.1"/>
    <property type="molecule type" value="Genomic_DNA"/>
</dbReference>
<dbReference type="RefSeq" id="XP_445637.1">
    <property type="nucleotide sequence ID" value="XM_445637.1"/>
</dbReference>
<dbReference type="FunCoup" id="Q6FVV7">
    <property type="interactions" value="209"/>
</dbReference>
<dbReference type="STRING" id="284593.Q6FVV7"/>
<dbReference type="EnsemblFungi" id="CAGL0D05236g-T">
    <property type="protein sequence ID" value="CAGL0D05236g-T-p1"/>
    <property type="gene ID" value="CAGL0D05236g"/>
</dbReference>
<dbReference type="KEGG" id="cgr:2887019"/>
<dbReference type="CGD" id="CAL0128143">
    <property type="gene designation" value="CAGL0D05236g"/>
</dbReference>
<dbReference type="VEuPathDB" id="FungiDB:CAGL0D05236g"/>
<dbReference type="eggNOG" id="ENOG502RZDM">
    <property type="taxonomic scope" value="Eukaryota"/>
</dbReference>
<dbReference type="HOGENOM" id="CLU_618198_0_0_1"/>
<dbReference type="InParanoid" id="Q6FVV7"/>
<dbReference type="Proteomes" id="UP000002428">
    <property type="component" value="Chromosome D"/>
</dbReference>
<dbReference type="GO" id="GO:0005737">
    <property type="term" value="C:cytoplasm"/>
    <property type="evidence" value="ECO:0007669"/>
    <property type="project" value="TreeGrafter"/>
</dbReference>
<dbReference type="GO" id="GO:0005634">
    <property type="term" value="C:nucleus"/>
    <property type="evidence" value="ECO:0007669"/>
    <property type="project" value="TreeGrafter"/>
</dbReference>
<dbReference type="GO" id="GO:1990904">
    <property type="term" value="C:ribonucleoprotein complex"/>
    <property type="evidence" value="ECO:0007669"/>
    <property type="project" value="TreeGrafter"/>
</dbReference>
<dbReference type="GO" id="GO:0003729">
    <property type="term" value="F:mRNA binding"/>
    <property type="evidence" value="ECO:0007669"/>
    <property type="project" value="TreeGrafter"/>
</dbReference>
<dbReference type="CDD" id="cd12409">
    <property type="entry name" value="RRM1_RRT5"/>
    <property type="match status" value="1"/>
</dbReference>
<dbReference type="CDD" id="cd12410">
    <property type="entry name" value="RRM2_RRT5"/>
    <property type="match status" value="1"/>
</dbReference>
<dbReference type="Gene3D" id="3.30.70.330">
    <property type="match status" value="2"/>
</dbReference>
<dbReference type="InterPro" id="IPR012677">
    <property type="entry name" value="Nucleotide-bd_a/b_plait_sf"/>
</dbReference>
<dbReference type="InterPro" id="IPR035979">
    <property type="entry name" value="RBD_domain_sf"/>
</dbReference>
<dbReference type="InterPro" id="IPR000504">
    <property type="entry name" value="RRM_dom"/>
</dbReference>
<dbReference type="InterPro" id="IPR003954">
    <property type="entry name" value="RRM_dom_euk"/>
</dbReference>
<dbReference type="InterPro" id="IPR034244">
    <property type="entry name" value="Rrt5_RRM1"/>
</dbReference>
<dbReference type="InterPro" id="IPR034247">
    <property type="entry name" value="Rrt5_RRM2"/>
</dbReference>
<dbReference type="InterPro" id="IPR050374">
    <property type="entry name" value="RRT5_SRSF_SR"/>
</dbReference>
<dbReference type="PANTHER" id="PTHR23003:SF54">
    <property type="entry name" value="REGULATOR OF RDNA TRANSCRIPTION PROTEIN 5"/>
    <property type="match status" value="1"/>
</dbReference>
<dbReference type="PANTHER" id="PTHR23003">
    <property type="entry name" value="RNA RECOGNITION MOTIF RRM DOMAIN CONTAINING PROTEIN"/>
    <property type="match status" value="1"/>
</dbReference>
<dbReference type="Pfam" id="PF00076">
    <property type="entry name" value="RRM_1"/>
    <property type="match status" value="1"/>
</dbReference>
<dbReference type="SMART" id="SM00360">
    <property type="entry name" value="RRM"/>
    <property type="match status" value="2"/>
</dbReference>
<dbReference type="SMART" id="SM00361">
    <property type="entry name" value="RRM_1"/>
    <property type="match status" value="1"/>
</dbReference>
<dbReference type="SUPFAM" id="SSF54928">
    <property type="entry name" value="RNA-binding domain, RBD"/>
    <property type="match status" value="1"/>
</dbReference>
<dbReference type="PROSITE" id="PS50102">
    <property type="entry name" value="RRM"/>
    <property type="match status" value="2"/>
</dbReference>
<protein>
    <recommendedName>
        <fullName>Regulator of rDNA transcription protein 5</fullName>
    </recommendedName>
</protein>
<sequence length="443" mass="49650">MSVSRIYIANVSYSSSEEDLREFLKDFNFSSVLIPCHTVRRFRRNEARSFGIAYVDFTSSEEAVRAVEELNGKEFGGRVLRVRTHNPYQPPKPIKERFGTKLQQLKKFAKYEDTAASGERAPTDAQDHPDQPQEGHMSPDVVLVNGTTDEEQQLANVINDPVTNADAPGTEQNISKEKAISEDTVYCAFLPKETTDNDLRNYFTDYGSREIWIFRTKNVSNSRFRFRNRNHTAALVTLSTELPLNKVIEELLGKKLLGTKISIKPAYIYKINEVKKIAEQSHMLATEYRHQNGNSDVVIGTPNEALLNSTQVASQIIGSNPEIEVSNQNSSSIANVAETNGNVGDTPITKLDSRNNIKIVNIGNPQDKTKKNQPNDNKELNKIDLETKNDSLHLESICDPIISIDMSGMTKQSVGSNKKKNKKKKSARGKEVRKLSVSNTTTQ</sequence>
<reference key="1">
    <citation type="journal article" date="2004" name="Nature">
        <title>Genome evolution in yeasts.</title>
        <authorList>
            <person name="Dujon B."/>
            <person name="Sherman D."/>
            <person name="Fischer G."/>
            <person name="Durrens P."/>
            <person name="Casaregola S."/>
            <person name="Lafontaine I."/>
            <person name="de Montigny J."/>
            <person name="Marck C."/>
            <person name="Neuveglise C."/>
            <person name="Talla E."/>
            <person name="Goffard N."/>
            <person name="Frangeul L."/>
            <person name="Aigle M."/>
            <person name="Anthouard V."/>
            <person name="Babour A."/>
            <person name="Barbe V."/>
            <person name="Barnay S."/>
            <person name="Blanchin S."/>
            <person name="Beckerich J.-M."/>
            <person name="Beyne E."/>
            <person name="Bleykasten C."/>
            <person name="Boisrame A."/>
            <person name="Boyer J."/>
            <person name="Cattolico L."/>
            <person name="Confanioleri F."/>
            <person name="de Daruvar A."/>
            <person name="Despons L."/>
            <person name="Fabre E."/>
            <person name="Fairhead C."/>
            <person name="Ferry-Dumazet H."/>
            <person name="Groppi A."/>
            <person name="Hantraye F."/>
            <person name="Hennequin C."/>
            <person name="Jauniaux N."/>
            <person name="Joyet P."/>
            <person name="Kachouri R."/>
            <person name="Kerrest A."/>
            <person name="Koszul R."/>
            <person name="Lemaire M."/>
            <person name="Lesur I."/>
            <person name="Ma L."/>
            <person name="Muller H."/>
            <person name="Nicaud J.-M."/>
            <person name="Nikolski M."/>
            <person name="Oztas S."/>
            <person name="Ozier-Kalogeropoulos O."/>
            <person name="Pellenz S."/>
            <person name="Potier S."/>
            <person name="Richard G.-F."/>
            <person name="Straub M.-L."/>
            <person name="Suleau A."/>
            <person name="Swennen D."/>
            <person name="Tekaia F."/>
            <person name="Wesolowski-Louvel M."/>
            <person name="Westhof E."/>
            <person name="Wirth B."/>
            <person name="Zeniou-Meyer M."/>
            <person name="Zivanovic Y."/>
            <person name="Bolotin-Fukuhara M."/>
            <person name="Thierry A."/>
            <person name="Bouchier C."/>
            <person name="Caudron B."/>
            <person name="Scarpelli C."/>
            <person name="Gaillardin C."/>
            <person name="Weissenbach J."/>
            <person name="Wincker P."/>
            <person name="Souciet J.-L."/>
        </authorList>
    </citation>
    <scope>NUCLEOTIDE SEQUENCE [LARGE SCALE GENOMIC DNA]</scope>
    <source>
        <strain>ATCC 2001 / BCRC 20586 / JCM 3761 / NBRC 0622 / NRRL Y-65 / CBS 138</strain>
    </source>
</reference>
<organism>
    <name type="scientific">Candida glabrata (strain ATCC 2001 / BCRC 20586 / JCM 3761 / NBRC 0622 / NRRL Y-65 / CBS 138)</name>
    <name type="common">Yeast</name>
    <name type="synonym">Nakaseomyces glabratus</name>
    <dbReference type="NCBI Taxonomy" id="284593"/>
    <lineage>
        <taxon>Eukaryota</taxon>
        <taxon>Fungi</taxon>
        <taxon>Dikarya</taxon>
        <taxon>Ascomycota</taxon>
        <taxon>Saccharomycotina</taxon>
        <taxon>Saccharomycetes</taxon>
        <taxon>Saccharomycetales</taxon>
        <taxon>Saccharomycetaceae</taxon>
        <taxon>Nakaseomyces</taxon>
    </lineage>
</organism>
<comment type="function">
    <text evidence="1">May be involved in the modulation of rDNA transcription.</text>
</comment>
<comment type="similarity">
    <text evidence="4">Belongs to the RRT5 family.</text>
</comment>
<keyword id="KW-1185">Reference proteome</keyword>
<keyword id="KW-0677">Repeat</keyword>
<keyword id="KW-0694">RNA-binding</keyword>
<keyword id="KW-0804">Transcription</keyword>
<keyword id="KW-0805">Transcription regulation</keyword>
<feature type="chain" id="PRO_0000404356" description="Regulator of rDNA transcription protein 5">
    <location>
        <begin position="1"/>
        <end position="443"/>
    </location>
</feature>
<feature type="domain" description="RRM 1" evidence="2">
    <location>
        <begin position="4"/>
        <end position="87"/>
    </location>
</feature>
<feature type="domain" description="RRM 2" evidence="2">
    <location>
        <begin position="183"/>
        <end position="268"/>
    </location>
</feature>
<feature type="region of interest" description="Disordered" evidence="3">
    <location>
        <begin position="112"/>
        <end position="140"/>
    </location>
</feature>
<feature type="region of interest" description="Disordered" evidence="3">
    <location>
        <begin position="408"/>
        <end position="443"/>
    </location>
</feature>
<feature type="compositionally biased region" description="Basic and acidic residues" evidence="3">
    <location>
        <begin position="121"/>
        <end position="133"/>
    </location>
</feature>
<feature type="compositionally biased region" description="Basic residues" evidence="3">
    <location>
        <begin position="417"/>
        <end position="427"/>
    </location>
</feature>
<gene>
    <name type="primary">RRT5</name>
    <name type="ordered locus">CAGL0D05236g</name>
</gene>